<sequence>MQYNFKVEAFEGPLDLLLHLIHRYEIDIYNIPVADITEQYLSYVHTMKELQLDVASEYLVMAATLLQIKSKMLLPKHEEDVLDNGDDFIDDPRQELMERLIEYKKYKQVATELKEREQERAQLYTRPPIDFTSLQQEEETSLPLDVTLYDMLAAFQKLMRRKKAKKPVTTRITRQEIPIEQRMTDILKQLKIKGGRQSFYDLFVDDEREIMVVTFLAVLELMKNQQIIIEQEHNFDEIFVSSSNKSA</sequence>
<reference key="1">
    <citation type="submission" date="2008-10" db="EMBL/GenBank/DDBJ databases">
        <title>Genome sequence of Bacillus cereus G9842.</title>
        <authorList>
            <person name="Dodson R.J."/>
            <person name="Durkin A.S."/>
            <person name="Rosovitz M.J."/>
            <person name="Rasko D.A."/>
            <person name="Hoffmaster A."/>
            <person name="Ravel J."/>
            <person name="Sutton G."/>
        </authorList>
    </citation>
    <scope>NUCLEOTIDE SEQUENCE [LARGE SCALE GENOMIC DNA]</scope>
    <source>
        <strain>G9842</strain>
    </source>
</reference>
<comment type="function">
    <text evidence="1">Participates in chromosomal partition during cell division. May act via the formation of a condensin-like complex containing Smc and ScpB that pull DNA away from mid-cell into both cell halves.</text>
</comment>
<comment type="subunit">
    <text evidence="1">Component of a cohesin-like complex composed of ScpA, ScpB and the Smc homodimer, in which ScpA and ScpB bind to the head domain of Smc. The presence of the three proteins is required for the association of the complex with DNA.</text>
</comment>
<comment type="subcellular location">
    <subcellularLocation>
        <location evidence="1">Cytoplasm</location>
    </subcellularLocation>
    <text evidence="1">Associated with two foci at the outer edges of the nucleoid region in young cells, and at four foci within both cell halves in older cells.</text>
</comment>
<comment type="similarity">
    <text evidence="1">Belongs to the ScpA family.</text>
</comment>
<evidence type="ECO:0000255" key="1">
    <source>
        <dbReference type="HAMAP-Rule" id="MF_01805"/>
    </source>
</evidence>
<name>SCPA_BACC2</name>
<protein>
    <recommendedName>
        <fullName evidence="1">Segregation and condensation protein A</fullName>
    </recommendedName>
</protein>
<organism>
    <name type="scientific">Bacillus cereus (strain G9842)</name>
    <dbReference type="NCBI Taxonomy" id="405531"/>
    <lineage>
        <taxon>Bacteria</taxon>
        <taxon>Bacillati</taxon>
        <taxon>Bacillota</taxon>
        <taxon>Bacilli</taxon>
        <taxon>Bacillales</taxon>
        <taxon>Bacillaceae</taxon>
        <taxon>Bacillus</taxon>
        <taxon>Bacillus cereus group</taxon>
    </lineage>
</organism>
<keyword id="KW-0131">Cell cycle</keyword>
<keyword id="KW-0132">Cell division</keyword>
<keyword id="KW-0159">Chromosome partition</keyword>
<keyword id="KW-0963">Cytoplasm</keyword>
<accession>B7IWH0</accession>
<dbReference type="EMBL" id="CP001186">
    <property type="protein sequence ID" value="ACK96612.1"/>
    <property type="molecule type" value="Genomic_DNA"/>
</dbReference>
<dbReference type="RefSeq" id="WP_001199753.1">
    <property type="nucleotide sequence ID" value="NC_011772.1"/>
</dbReference>
<dbReference type="SMR" id="B7IWH0"/>
<dbReference type="KEGG" id="bcg:BCG9842_B1071"/>
<dbReference type="HOGENOM" id="CLU_038686_3_1_9"/>
<dbReference type="Proteomes" id="UP000006744">
    <property type="component" value="Chromosome"/>
</dbReference>
<dbReference type="GO" id="GO:0005737">
    <property type="term" value="C:cytoplasm"/>
    <property type="evidence" value="ECO:0007669"/>
    <property type="project" value="UniProtKB-SubCell"/>
</dbReference>
<dbReference type="GO" id="GO:0051301">
    <property type="term" value="P:cell division"/>
    <property type="evidence" value="ECO:0007669"/>
    <property type="project" value="UniProtKB-KW"/>
</dbReference>
<dbReference type="GO" id="GO:0007059">
    <property type="term" value="P:chromosome segregation"/>
    <property type="evidence" value="ECO:0007669"/>
    <property type="project" value="UniProtKB-UniRule"/>
</dbReference>
<dbReference type="GO" id="GO:0006260">
    <property type="term" value="P:DNA replication"/>
    <property type="evidence" value="ECO:0007669"/>
    <property type="project" value="UniProtKB-UniRule"/>
</dbReference>
<dbReference type="Gene3D" id="6.10.250.2410">
    <property type="match status" value="1"/>
</dbReference>
<dbReference type="Gene3D" id="1.10.10.580">
    <property type="entry name" value="Structural maintenance of chromosome 1. Chain E"/>
    <property type="match status" value="1"/>
</dbReference>
<dbReference type="HAMAP" id="MF_01805">
    <property type="entry name" value="ScpA"/>
    <property type="match status" value="1"/>
</dbReference>
<dbReference type="InterPro" id="IPR003768">
    <property type="entry name" value="ScpA"/>
</dbReference>
<dbReference type="InterPro" id="IPR023093">
    <property type="entry name" value="ScpA-like_C"/>
</dbReference>
<dbReference type="NCBIfam" id="NF000992">
    <property type="entry name" value="PRK00104.1-1"/>
    <property type="match status" value="1"/>
</dbReference>
<dbReference type="NCBIfam" id="NF000995">
    <property type="entry name" value="PRK00104.1-4"/>
    <property type="match status" value="1"/>
</dbReference>
<dbReference type="PANTHER" id="PTHR33969">
    <property type="entry name" value="SEGREGATION AND CONDENSATION PROTEIN A"/>
    <property type="match status" value="1"/>
</dbReference>
<dbReference type="PANTHER" id="PTHR33969:SF2">
    <property type="entry name" value="SEGREGATION AND CONDENSATION PROTEIN A"/>
    <property type="match status" value="1"/>
</dbReference>
<dbReference type="Pfam" id="PF02616">
    <property type="entry name" value="SMC_ScpA"/>
    <property type="match status" value="1"/>
</dbReference>
<gene>
    <name evidence="1" type="primary">scpA</name>
    <name type="ordered locus">BCG9842_B1071</name>
</gene>
<proteinExistence type="inferred from homology"/>
<feature type="chain" id="PRO_1000187551" description="Segregation and condensation protein A">
    <location>
        <begin position="1"/>
        <end position="247"/>
    </location>
</feature>